<keyword id="KW-0963">Cytoplasm</keyword>
<keyword id="KW-0903">Direct protein sequencing</keyword>
<keyword id="KW-0349">Heme</keyword>
<keyword id="KW-0408">Iron</keyword>
<keyword id="KW-0479">Metal-binding</keyword>
<keyword id="KW-0514">Muscle protein</keyword>
<keyword id="KW-0560">Oxidoreductase</keyword>
<keyword id="KW-0561">Oxygen transport</keyword>
<keyword id="KW-0597">Phosphoprotein</keyword>
<keyword id="KW-0813">Transport</keyword>
<reference key="1">
    <citation type="journal article" date="1978" name="Biochemistry">
        <title>Complete amino acid sequence of the major component myoglobin of finback whale (Balaenoptera physalus).</title>
        <authorList>
            <person name="Dimarchi R.D."/>
            <person name="Wang C.-C."/>
            <person name="Hemenway J.B."/>
            <person name="Gurd F.R.N."/>
        </authorList>
    </citation>
    <scope>PROTEIN SEQUENCE OF 2-154</scope>
    <source>
        <tissue>Skeletal muscle</tissue>
    </source>
</reference>
<protein>
    <recommendedName>
        <fullName>Myoglobin</fullName>
    </recommendedName>
    <alternativeName>
        <fullName evidence="1">Nitrite reductase MB</fullName>
        <ecNumber evidence="1">1.7.-.-</ecNumber>
    </alternativeName>
    <alternativeName>
        <fullName evidence="1">Pseudoperoxidase MB</fullName>
        <ecNumber evidence="1">1.11.1.-</ecNumber>
    </alternativeName>
</protein>
<proteinExistence type="evidence at protein level"/>
<feature type="initiator methionine" description="Removed" evidence="7">
    <location>
        <position position="1"/>
    </location>
</feature>
<feature type="chain" id="PRO_0000053279" description="Myoglobin">
    <location>
        <begin position="2"/>
        <end position="154"/>
    </location>
</feature>
<feature type="domain" description="Globin" evidence="6">
    <location>
        <begin position="2"/>
        <end position="148"/>
    </location>
</feature>
<feature type="binding site" evidence="5">
    <location>
        <position position="65"/>
    </location>
    <ligand>
        <name>nitrite</name>
        <dbReference type="ChEBI" id="CHEBI:16301"/>
    </ligand>
</feature>
<feature type="binding site" evidence="3 6">
    <location>
        <position position="65"/>
    </location>
    <ligand>
        <name>O2</name>
        <dbReference type="ChEBI" id="CHEBI:15379"/>
    </ligand>
</feature>
<feature type="binding site" description="proximal binding residue" evidence="1">
    <location>
        <position position="94"/>
    </location>
    <ligand>
        <name>heme b</name>
        <dbReference type="ChEBI" id="CHEBI:60344"/>
    </ligand>
    <ligandPart>
        <name>Fe</name>
        <dbReference type="ChEBI" id="CHEBI:18248"/>
    </ligandPart>
</feature>
<feature type="modified residue" description="Phosphothreonine" evidence="4">
    <location>
        <position position="68"/>
    </location>
</feature>
<name>MYG_BALPH</name>
<accession>P02180</accession>
<gene>
    <name type="primary">MB</name>
</gene>
<evidence type="ECO:0000250" key="1">
    <source>
        <dbReference type="UniProtKB" id="P02144"/>
    </source>
</evidence>
<evidence type="ECO:0000250" key="2">
    <source>
        <dbReference type="UniProtKB" id="P02185"/>
    </source>
</evidence>
<evidence type="ECO:0000250" key="3">
    <source>
        <dbReference type="UniProtKB" id="P02189"/>
    </source>
</evidence>
<evidence type="ECO:0000250" key="4">
    <source>
        <dbReference type="UniProtKB" id="P04247"/>
    </source>
</evidence>
<evidence type="ECO:0000250" key="5">
    <source>
        <dbReference type="UniProtKB" id="P68082"/>
    </source>
</evidence>
<evidence type="ECO:0000255" key="6">
    <source>
        <dbReference type="PROSITE-ProRule" id="PRU00238"/>
    </source>
</evidence>
<evidence type="ECO:0000269" key="7">
    <source>
    </source>
</evidence>
<comment type="function">
    <text evidence="1">Monomeric heme protein which primary function is to store oxygen and facilitate its diffusion within muscle tissues. Reversibly binds oxygen through a pentacoordinated heme iron and enables its timely and efficient release as needed during periods of heightened demand. Depending on the oxidative conditions of tissues and cells, and in addition to its ability to bind oxygen, it also has a nitrite reductase activity whereby it regulates the production of bioactive nitric oxide. Under stress conditions, like hypoxia and anoxia, it also protects cells against reactive oxygen species thanks to its pseudoperoxidase activity.</text>
</comment>
<comment type="catalytic activity">
    <reaction evidence="1">
        <text>Fe(III)-heme b-[protein] + nitric oxide + H2O = Fe(II)-heme b-[protein] + nitrite + 2 H(+)</text>
        <dbReference type="Rhea" id="RHEA:77711"/>
        <dbReference type="Rhea" id="RHEA-COMP:18975"/>
        <dbReference type="Rhea" id="RHEA-COMP:18976"/>
        <dbReference type="ChEBI" id="CHEBI:15377"/>
        <dbReference type="ChEBI" id="CHEBI:15378"/>
        <dbReference type="ChEBI" id="CHEBI:16301"/>
        <dbReference type="ChEBI" id="CHEBI:16480"/>
        <dbReference type="ChEBI" id="CHEBI:55376"/>
        <dbReference type="ChEBI" id="CHEBI:60344"/>
    </reaction>
    <physiologicalReaction direction="right-to-left" evidence="1">
        <dbReference type="Rhea" id="RHEA:77713"/>
    </physiologicalReaction>
</comment>
<comment type="catalytic activity">
    <reaction evidence="1">
        <text>H2O2 + AH2 = A + 2 H2O</text>
        <dbReference type="Rhea" id="RHEA:30275"/>
        <dbReference type="ChEBI" id="CHEBI:13193"/>
        <dbReference type="ChEBI" id="CHEBI:15377"/>
        <dbReference type="ChEBI" id="CHEBI:16240"/>
        <dbReference type="ChEBI" id="CHEBI:17499"/>
    </reaction>
</comment>
<comment type="subunit">
    <text evidence="2">Monomeric.</text>
</comment>
<comment type="subcellular location">
    <subcellularLocation>
        <location evidence="1">Cytoplasm</location>
        <location evidence="1">Sarcoplasm</location>
    </subcellularLocation>
</comment>
<comment type="similarity">
    <text evidence="6">Belongs to the globin family.</text>
</comment>
<sequence>MVLTDAEWHLVLNIWAKVEADVAGHGQDILISLFKGHPETLEKFDKFKHLKTEAEMKASEDLKKHGNTVLTALGGILKKKGHHEAELKPLAQSHATKHKIPIKYLEFISDAIIHVLHSRHPADFGADAQAAMNKALELFRKDIAAKYKELGFQG</sequence>
<dbReference type="EC" id="1.7.-.-" evidence="1"/>
<dbReference type="EC" id="1.11.1.-" evidence="1"/>
<dbReference type="PIR" id="A02502">
    <property type="entry name" value="MYWHF"/>
</dbReference>
<dbReference type="SMR" id="P02180"/>
<dbReference type="GO" id="GO:0070062">
    <property type="term" value="C:extracellular exosome"/>
    <property type="evidence" value="ECO:0007669"/>
    <property type="project" value="TreeGrafter"/>
</dbReference>
<dbReference type="GO" id="GO:0016528">
    <property type="term" value="C:sarcoplasm"/>
    <property type="evidence" value="ECO:0000250"/>
    <property type="project" value="UniProtKB"/>
</dbReference>
<dbReference type="GO" id="GO:0020037">
    <property type="term" value="F:heme binding"/>
    <property type="evidence" value="ECO:0007669"/>
    <property type="project" value="InterPro"/>
</dbReference>
<dbReference type="GO" id="GO:0046872">
    <property type="term" value="F:metal ion binding"/>
    <property type="evidence" value="ECO:0007669"/>
    <property type="project" value="UniProtKB-KW"/>
</dbReference>
<dbReference type="GO" id="GO:0098809">
    <property type="term" value="F:nitrite reductase activity"/>
    <property type="evidence" value="ECO:0000250"/>
    <property type="project" value="UniProtKB"/>
</dbReference>
<dbReference type="GO" id="GO:0019825">
    <property type="term" value="F:oxygen binding"/>
    <property type="evidence" value="ECO:0007669"/>
    <property type="project" value="InterPro"/>
</dbReference>
<dbReference type="GO" id="GO:0005344">
    <property type="term" value="F:oxygen carrier activity"/>
    <property type="evidence" value="ECO:0000250"/>
    <property type="project" value="UniProtKB"/>
</dbReference>
<dbReference type="GO" id="GO:0004601">
    <property type="term" value="F:peroxidase activity"/>
    <property type="evidence" value="ECO:0000250"/>
    <property type="project" value="UniProtKB"/>
</dbReference>
<dbReference type="GO" id="GO:0019430">
    <property type="term" value="P:removal of superoxide radicals"/>
    <property type="evidence" value="ECO:0000250"/>
    <property type="project" value="UniProtKB"/>
</dbReference>
<dbReference type="Gene3D" id="6.10.140.2100">
    <property type="match status" value="1"/>
</dbReference>
<dbReference type="Gene3D" id="6.10.140.2110">
    <property type="match status" value="1"/>
</dbReference>
<dbReference type="InterPro" id="IPR000971">
    <property type="entry name" value="Globin"/>
</dbReference>
<dbReference type="InterPro" id="IPR009050">
    <property type="entry name" value="Globin-like_sf"/>
</dbReference>
<dbReference type="InterPro" id="IPR002335">
    <property type="entry name" value="Myoglobin"/>
</dbReference>
<dbReference type="PANTHER" id="PTHR47132">
    <property type="entry name" value="MYOGLOBIN"/>
    <property type="match status" value="1"/>
</dbReference>
<dbReference type="PANTHER" id="PTHR47132:SF1">
    <property type="entry name" value="MYOGLOBIN"/>
    <property type="match status" value="1"/>
</dbReference>
<dbReference type="Pfam" id="PF00042">
    <property type="entry name" value="Globin"/>
    <property type="match status" value="1"/>
</dbReference>
<dbReference type="PRINTS" id="PR00613">
    <property type="entry name" value="MYOGLOBIN"/>
</dbReference>
<dbReference type="SUPFAM" id="SSF46458">
    <property type="entry name" value="Globin-like"/>
    <property type="match status" value="1"/>
</dbReference>
<dbReference type="PROSITE" id="PS01033">
    <property type="entry name" value="GLOBIN"/>
    <property type="match status" value="1"/>
</dbReference>
<organism>
    <name type="scientific">Balaenoptera physalus</name>
    <name type="common">Fin whale</name>
    <name type="synonym">Balaena physalus</name>
    <dbReference type="NCBI Taxonomy" id="9770"/>
    <lineage>
        <taxon>Eukaryota</taxon>
        <taxon>Metazoa</taxon>
        <taxon>Chordata</taxon>
        <taxon>Craniata</taxon>
        <taxon>Vertebrata</taxon>
        <taxon>Euteleostomi</taxon>
        <taxon>Mammalia</taxon>
        <taxon>Eutheria</taxon>
        <taxon>Laurasiatheria</taxon>
        <taxon>Artiodactyla</taxon>
        <taxon>Whippomorpha</taxon>
        <taxon>Cetacea</taxon>
        <taxon>Mysticeti</taxon>
        <taxon>Balaenopteridae</taxon>
        <taxon>Balaenoptera</taxon>
    </lineage>
</organism>